<evidence type="ECO:0000250" key="1"/>
<evidence type="ECO:0000255" key="2"/>
<evidence type="ECO:0000255" key="3">
    <source>
        <dbReference type="PROSITE-ProRule" id="PRU00691"/>
    </source>
</evidence>
<evidence type="ECO:0000269" key="4">
    <source>
    </source>
</evidence>
<evidence type="ECO:0000305" key="5"/>
<name>TRXM_BRANA</name>
<feature type="transit peptide" description="Chloroplast" evidence="2">
    <location>
        <begin position="1"/>
        <end position="64"/>
    </location>
</feature>
<feature type="chain" id="PRO_0000034173" description="Thioredoxin M-type, chloroplastic">
    <location>
        <begin position="65"/>
        <end position="177"/>
    </location>
</feature>
<feature type="domain" description="Thioredoxin" evidence="3">
    <location>
        <begin position="65"/>
        <end position="177"/>
    </location>
</feature>
<feature type="active site" description="Nucleophile" evidence="1">
    <location>
        <position position="101"/>
    </location>
</feature>
<feature type="active site" description="Nucleophile" evidence="1">
    <location>
        <position position="104"/>
    </location>
</feature>
<feature type="site" description="Deprotonates C-terminal active site Cys" evidence="1">
    <location>
        <position position="95"/>
    </location>
</feature>
<feature type="site" description="Contributes to redox potential value" evidence="1">
    <location>
        <position position="102"/>
    </location>
</feature>
<feature type="site" description="Contributes to redox potential value" evidence="1">
    <location>
        <position position="103"/>
    </location>
</feature>
<feature type="disulfide bond" description="Redox-active" evidence="3">
    <location>
        <begin position="101"/>
        <end position="104"/>
    </location>
</feature>
<feature type="mutagenesis site" description="Reduces chloroplast FBPase activity." evidence="4">
    <original>P</original>
    <variation>E</variation>
    <location>
        <position position="99"/>
    </location>
</feature>
<feature type="mutagenesis site" description="Enhances chloroplast FBPase activity." evidence="4">
    <original>P</original>
    <variation>K</variation>
    <location>
        <position position="99"/>
    </location>
</feature>
<proteinExistence type="evidence at protein level"/>
<accession>Q9XGS0</accession>
<accession>O03043</accession>
<dbReference type="EMBL" id="U76831">
    <property type="protein sequence ID" value="AAB52409.1"/>
    <property type="molecule type" value="mRNA"/>
</dbReference>
<dbReference type="EMBL" id="AF160870">
    <property type="protein sequence ID" value="AAD45358.1"/>
    <property type="molecule type" value="mRNA"/>
</dbReference>
<dbReference type="PIR" id="T09495">
    <property type="entry name" value="T09495"/>
</dbReference>
<dbReference type="SMR" id="Q9XGS0"/>
<dbReference type="GO" id="GO:0009507">
    <property type="term" value="C:chloroplast"/>
    <property type="evidence" value="ECO:0007669"/>
    <property type="project" value="UniProtKB-SubCell"/>
</dbReference>
<dbReference type="GO" id="GO:0008047">
    <property type="term" value="F:enzyme activator activity"/>
    <property type="evidence" value="ECO:0007669"/>
    <property type="project" value="UniProtKB-ARBA"/>
</dbReference>
<dbReference type="GO" id="GO:0015035">
    <property type="term" value="F:protein-disulfide reductase activity"/>
    <property type="evidence" value="ECO:0007669"/>
    <property type="project" value="InterPro"/>
</dbReference>
<dbReference type="CDD" id="cd02947">
    <property type="entry name" value="TRX_family"/>
    <property type="match status" value="1"/>
</dbReference>
<dbReference type="FunFam" id="3.40.30.10:FF:000001">
    <property type="entry name" value="Thioredoxin"/>
    <property type="match status" value="1"/>
</dbReference>
<dbReference type="Gene3D" id="3.40.30.10">
    <property type="entry name" value="Glutaredoxin"/>
    <property type="match status" value="1"/>
</dbReference>
<dbReference type="InterPro" id="IPR005746">
    <property type="entry name" value="Thioredoxin"/>
</dbReference>
<dbReference type="InterPro" id="IPR036249">
    <property type="entry name" value="Thioredoxin-like_sf"/>
</dbReference>
<dbReference type="InterPro" id="IPR017937">
    <property type="entry name" value="Thioredoxin_CS"/>
</dbReference>
<dbReference type="InterPro" id="IPR013766">
    <property type="entry name" value="Thioredoxin_domain"/>
</dbReference>
<dbReference type="NCBIfam" id="TIGR01068">
    <property type="entry name" value="thioredoxin"/>
    <property type="match status" value="1"/>
</dbReference>
<dbReference type="PANTHER" id="PTHR45663">
    <property type="entry name" value="GEO12009P1"/>
    <property type="match status" value="1"/>
</dbReference>
<dbReference type="PANTHER" id="PTHR45663:SF23">
    <property type="entry name" value="THIOREDOXIN DOMAIN-CONTAINING PROTEIN"/>
    <property type="match status" value="1"/>
</dbReference>
<dbReference type="Pfam" id="PF00085">
    <property type="entry name" value="Thioredoxin"/>
    <property type="match status" value="1"/>
</dbReference>
<dbReference type="PRINTS" id="PR00421">
    <property type="entry name" value="THIOREDOXIN"/>
</dbReference>
<dbReference type="SUPFAM" id="SSF52833">
    <property type="entry name" value="Thioredoxin-like"/>
    <property type="match status" value="1"/>
</dbReference>
<dbReference type="PROSITE" id="PS00194">
    <property type="entry name" value="THIOREDOXIN_1"/>
    <property type="match status" value="1"/>
</dbReference>
<dbReference type="PROSITE" id="PS51352">
    <property type="entry name" value="THIOREDOXIN_2"/>
    <property type="match status" value="1"/>
</dbReference>
<organism>
    <name type="scientific">Brassica napus</name>
    <name type="common">Rape</name>
    <dbReference type="NCBI Taxonomy" id="3708"/>
    <lineage>
        <taxon>Eukaryota</taxon>
        <taxon>Viridiplantae</taxon>
        <taxon>Streptophyta</taxon>
        <taxon>Embryophyta</taxon>
        <taxon>Tracheophyta</taxon>
        <taxon>Spermatophyta</taxon>
        <taxon>Magnoliopsida</taxon>
        <taxon>eudicotyledons</taxon>
        <taxon>Gunneridae</taxon>
        <taxon>Pentapetalae</taxon>
        <taxon>rosids</taxon>
        <taxon>malvids</taxon>
        <taxon>Brassicales</taxon>
        <taxon>Brassicaceae</taxon>
        <taxon>Brassiceae</taxon>
        <taxon>Brassica</taxon>
    </lineage>
</organism>
<sequence length="177" mass="19269">MAAFTCTSSPPISLRSEMMIASSKTVSLSTRQMFSVGGLRTRVSLSSVSKNSRASRLRRGGIICEAQDTATGIPMVNDSTWESLVLKADEPVVVDFWAPWCGPCKMIDPIVNELAQQYTGKIKFFKLNTDDSPATPGKYGVRSIPTIMIFVKGEKKDTIIGAVPKTTLATSIDKFLQ</sequence>
<reference key="1">
    <citation type="journal article" date="2001" name="Biochim. Biophys. Acta">
        <title>Rapeseed chloroplast thioredoxin-m. Modulation of the affinity for target proteins.</title>
        <authorList>
            <person name="Duek P.D."/>
            <person name="Wolosiuk R.A."/>
        </authorList>
    </citation>
    <scope>NUCLEOTIDE SEQUENCE [MRNA]</scope>
    <scope>MUTAGENESIS</scope>
</reference>
<comment type="function">
    <text evidence="1">Participates in various redox reactions through the reversible oxidation of the active center dithiol to a disulfide. The M form is known to activate NADP-malate dehydrogenase (By similarity).</text>
</comment>
<comment type="subunit">
    <text evidence="1">Forms a complex with heterodimeric ferredoxin-thioredoxin reductase (FTR) and ferredoxin.</text>
</comment>
<comment type="subcellular location">
    <subcellularLocation>
        <location>Plastid</location>
        <location>Chloroplast</location>
    </subcellularLocation>
</comment>
<comment type="similarity">
    <text evidence="5">Belongs to the thioredoxin family. Plant M-type subfamily.</text>
</comment>
<keyword id="KW-0150">Chloroplast</keyword>
<keyword id="KW-1015">Disulfide bond</keyword>
<keyword id="KW-0249">Electron transport</keyword>
<keyword id="KW-0934">Plastid</keyword>
<keyword id="KW-0676">Redox-active center</keyword>
<keyword id="KW-0809">Transit peptide</keyword>
<keyword id="KW-0813">Transport</keyword>
<protein>
    <recommendedName>
        <fullName>Thioredoxin M-type, chloroplastic</fullName>
        <shortName>Trx-M</shortName>
    </recommendedName>
</protein>